<accession>P66163</accession>
<accession>Q9PE22</accession>
<organism>
    <name type="scientific">Xylella fastidiosa (strain Temecula1 / ATCC 700964)</name>
    <dbReference type="NCBI Taxonomy" id="183190"/>
    <lineage>
        <taxon>Bacteria</taxon>
        <taxon>Pseudomonadati</taxon>
        <taxon>Pseudomonadota</taxon>
        <taxon>Gammaproteobacteria</taxon>
        <taxon>Lysobacterales</taxon>
        <taxon>Lysobacteraceae</taxon>
        <taxon>Xylella</taxon>
    </lineage>
</organism>
<comment type="similarity">
    <text evidence="1">Belongs to the bacterial ribosomal protein bL28 family.</text>
</comment>
<dbReference type="EMBL" id="AE009442">
    <property type="protein sequence ID" value="AAO28363.1"/>
    <property type="molecule type" value="Genomic_DNA"/>
</dbReference>
<dbReference type="RefSeq" id="WP_004086565.1">
    <property type="nucleotide sequence ID" value="NC_004556.1"/>
</dbReference>
<dbReference type="SMR" id="P66163"/>
<dbReference type="GeneID" id="93904190"/>
<dbReference type="KEGG" id="xft:PD_0488"/>
<dbReference type="HOGENOM" id="CLU_064548_3_1_6"/>
<dbReference type="Proteomes" id="UP000002516">
    <property type="component" value="Chromosome"/>
</dbReference>
<dbReference type="GO" id="GO:0022625">
    <property type="term" value="C:cytosolic large ribosomal subunit"/>
    <property type="evidence" value="ECO:0007669"/>
    <property type="project" value="TreeGrafter"/>
</dbReference>
<dbReference type="GO" id="GO:0003735">
    <property type="term" value="F:structural constituent of ribosome"/>
    <property type="evidence" value="ECO:0007669"/>
    <property type="project" value="InterPro"/>
</dbReference>
<dbReference type="GO" id="GO:0006412">
    <property type="term" value="P:translation"/>
    <property type="evidence" value="ECO:0007669"/>
    <property type="project" value="UniProtKB-UniRule"/>
</dbReference>
<dbReference type="FunFam" id="2.30.170.40:FF:000001">
    <property type="entry name" value="50S ribosomal protein L28"/>
    <property type="match status" value="1"/>
</dbReference>
<dbReference type="Gene3D" id="2.30.170.40">
    <property type="entry name" value="Ribosomal protein L28/L24"/>
    <property type="match status" value="1"/>
</dbReference>
<dbReference type="HAMAP" id="MF_00373">
    <property type="entry name" value="Ribosomal_bL28"/>
    <property type="match status" value="1"/>
</dbReference>
<dbReference type="InterPro" id="IPR026569">
    <property type="entry name" value="Ribosomal_bL28"/>
</dbReference>
<dbReference type="InterPro" id="IPR034704">
    <property type="entry name" value="Ribosomal_bL28/bL31-like_sf"/>
</dbReference>
<dbReference type="InterPro" id="IPR001383">
    <property type="entry name" value="Ribosomal_bL28_bact-type"/>
</dbReference>
<dbReference type="InterPro" id="IPR037147">
    <property type="entry name" value="Ribosomal_bL28_sf"/>
</dbReference>
<dbReference type="NCBIfam" id="TIGR00009">
    <property type="entry name" value="L28"/>
    <property type="match status" value="1"/>
</dbReference>
<dbReference type="PANTHER" id="PTHR13528">
    <property type="entry name" value="39S RIBOSOMAL PROTEIN L28, MITOCHONDRIAL"/>
    <property type="match status" value="1"/>
</dbReference>
<dbReference type="PANTHER" id="PTHR13528:SF2">
    <property type="entry name" value="LARGE RIBOSOMAL SUBUNIT PROTEIN BL28M"/>
    <property type="match status" value="1"/>
</dbReference>
<dbReference type="Pfam" id="PF00830">
    <property type="entry name" value="Ribosomal_L28"/>
    <property type="match status" value="1"/>
</dbReference>
<dbReference type="SUPFAM" id="SSF143800">
    <property type="entry name" value="L28p-like"/>
    <property type="match status" value="1"/>
</dbReference>
<gene>
    <name type="primary">rpmB</name>
    <name type="ordered locus">PD_0488</name>
</gene>
<protein>
    <recommendedName>
        <fullName evidence="1">Large ribosomal subunit protein bL28</fullName>
    </recommendedName>
    <alternativeName>
        <fullName>50S ribosomal protein L28</fullName>
    </alternativeName>
</protein>
<feature type="chain" id="PRO_0000178596" description="Large ribosomal subunit protein bL28">
    <location>
        <begin position="1"/>
        <end position="78"/>
    </location>
</feature>
<proteinExistence type="inferred from homology"/>
<keyword id="KW-1185">Reference proteome</keyword>
<keyword id="KW-0687">Ribonucleoprotein</keyword>
<keyword id="KW-0689">Ribosomal protein</keyword>
<sequence length="78" mass="8932">MSRVCQVTGKRVQTGNNVSHANNKTRRRFLPNLHKRRFWVASENRWVKLRVSTCAVRTIDKNGIDAVLAELRASGEKV</sequence>
<reference key="1">
    <citation type="journal article" date="2003" name="J. Bacteriol.">
        <title>Comparative analyses of the complete genome sequences of Pierce's disease and citrus variegated chlorosis strains of Xylella fastidiosa.</title>
        <authorList>
            <person name="Van Sluys M.A."/>
            <person name="de Oliveira M.C."/>
            <person name="Monteiro-Vitorello C.B."/>
            <person name="Miyaki C.Y."/>
            <person name="Furlan L.R."/>
            <person name="Camargo L.E.A."/>
            <person name="da Silva A.C.R."/>
            <person name="Moon D.H."/>
            <person name="Takita M.A."/>
            <person name="Lemos E.G.M."/>
            <person name="Machado M.A."/>
            <person name="Ferro M.I.T."/>
            <person name="da Silva F.R."/>
            <person name="Goldman M.H.S."/>
            <person name="Goldman G.H."/>
            <person name="Lemos M.V.F."/>
            <person name="El-Dorry H."/>
            <person name="Tsai S.M."/>
            <person name="Carrer H."/>
            <person name="Carraro D.M."/>
            <person name="de Oliveira R.C."/>
            <person name="Nunes L.R."/>
            <person name="Siqueira W.J."/>
            <person name="Coutinho L.L."/>
            <person name="Kimura E.T."/>
            <person name="Ferro E.S."/>
            <person name="Harakava R."/>
            <person name="Kuramae E.E."/>
            <person name="Marino C.L."/>
            <person name="Giglioti E."/>
            <person name="Abreu I.L."/>
            <person name="Alves L.M.C."/>
            <person name="do Amaral A.M."/>
            <person name="Baia G.S."/>
            <person name="Blanco S.R."/>
            <person name="Brito M.S."/>
            <person name="Cannavan F.S."/>
            <person name="Celestino A.V."/>
            <person name="da Cunha A.F."/>
            <person name="Fenille R.C."/>
            <person name="Ferro J.A."/>
            <person name="Formighieri E.F."/>
            <person name="Kishi L.T."/>
            <person name="Leoni S.G."/>
            <person name="Oliveira A.R."/>
            <person name="Rosa V.E. Jr."/>
            <person name="Sassaki F.T."/>
            <person name="Sena J.A.D."/>
            <person name="de Souza A.A."/>
            <person name="Truffi D."/>
            <person name="Tsukumo F."/>
            <person name="Yanai G.M."/>
            <person name="Zaros L.G."/>
            <person name="Civerolo E.L."/>
            <person name="Simpson A.J.G."/>
            <person name="Almeida N.F. Jr."/>
            <person name="Setubal J.C."/>
            <person name="Kitajima J.P."/>
        </authorList>
    </citation>
    <scope>NUCLEOTIDE SEQUENCE [LARGE SCALE GENOMIC DNA]</scope>
    <source>
        <strain>Temecula1 / ATCC 700964</strain>
    </source>
</reference>
<evidence type="ECO:0000305" key="1"/>
<name>RL28_XYLFT</name>